<accession>P45416</accession>
<accession>E0SFG7</accession>
<name>KDGK_DICD3</name>
<comment type="function">
    <text evidence="2">Catalyzes the phosphorylation of 2-keto-3-deoxygluconate (KDG) to produce 2-keto-3-deoxy-6-phosphogluconate (KDPG).</text>
</comment>
<comment type="catalytic activity">
    <reaction evidence="2">
        <text>2-dehydro-3-deoxy-D-gluconate + ATP = 2-dehydro-3-deoxy-6-phospho-D-gluconate + ADP + H(+)</text>
        <dbReference type="Rhea" id="RHEA:14797"/>
        <dbReference type="ChEBI" id="CHEBI:15378"/>
        <dbReference type="ChEBI" id="CHEBI:30616"/>
        <dbReference type="ChEBI" id="CHEBI:57569"/>
        <dbReference type="ChEBI" id="CHEBI:57990"/>
        <dbReference type="ChEBI" id="CHEBI:456216"/>
        <dbReference type="EC" id="2.7.1.45"/>
    </reaction>
</comment>
<comment type="pathway">
    <text>Carbohydrate acid metabolism; 2-dehydro-3-deoxy-D-gluconate degradation; D-glyceraldehyde 3-phosphate and pyruvate from 2-dehydro-3-deoxy-D-gluconate: step 1/2.</text>
</comment>
<comment type="induction">
    <text evidence="2">Expression is probably repressed by KdgR, which binds to its 5'-UTR.</text>
</comment>
<comment type="similarity">
    <text evidence="4">Belongs to the carbohydrate kinase PfkB family.</text>
</comment>
<comment type="sequence caution" evidence="5">
    <conflict type="frameshift">
        <sequence resource="EMBL-CDS" id="CAA52961"/>
    </conflict>
</comment>
<sequence>MTTKNIAIIGECMIELSQKGADLNRGFGGDTLNTAVYISRQVKPDALDVHYVTALGTDSFSSEMMASWQKEGVKTDLIQRLDNKLPGLYFIETDATGERTFYYWRNDAAARYWLESPDADTISQQLAQFDYIYLSGISLAILNQASRARLLTVLRACRANGGKVIFDNNYRPRLWQSKEETRQAYSDMLACTDIAFLTLDDEDMLWGELPVDEVLKRTHGAGVMEVVIKRGADACLVSIQGEALLEVPAIKLPKEKVVDTTAAGDSFSAGYLSVRLNGGSAQDAAKRGHLTASTVIQYRGAIIPLEAMPA</sequence>
<feature type="chain" id="PRO_0000080086" description="2-dehydro-3-deoxygluconokinase">
    <location>
        <begin position="1"/>
        <end position="310"/>
    </location>
</feature>
<feature type="active site" description="Proton acceptor" evidence="1">
    <location>
        <position position="265"/>
    </location>
</feature>
<feature type="binding site" evidence="1">
    <location>
        <begin position="29"/>
        <end position="33"/>
    </location>
    <ligand>
        <name>substrate</name>
    </ligand>
</feature>
<feature type="binding site" evidence="1">
    <location>
        <position position="89"/>
    </location>
    <ligand>
        <name>substrate</name>
    </ligand>
</feature>
<feature type="binding site" evidence="1">
    <location>
        <begin position="103"/>
        <end position="105"/>
    </location>
    <ligand>
        <name>substrate</name>
    </ligand>
</feature>
<feature type="binding site" evidence="1">
    <location>
        <begin position="169"/>
        <end position="171"/>
    </location>
    <ligand>
        <name>ATP</name>
        <dbReference type="ChEBI" id="CHEBI:30616"/>
    </ligand>
</feature>
<feature type="binding site" evidence="1">
    <location>
        <position position="171"/>
    </location>
    <ligand>
        <name>substrate</name>
    </ligand>
</feature>
<feature type="binding site" evidence="1">
    <location>
        <begin position="229"/>
        <end position="234"/>
    </location>
    <ligand>
        <name>ATP</name>
        <dbReference type="ChEBI" id="CHEBI:30616"/>
    </ligand>
</feature>
<feature type="binding site" evidence="1">
    <location>
        <begin position="262"/>
        <end position="265"/>
    </location>
    <ligand>
        <name>ATP</name>
        <dbReference type="ChEBI" id="CHEBI:30616"/>
    </ligand>
</feature>
<feature type="binding site" evidence="1">
    <location>
        <position position="265"/>
    </location>
    <ligand>
        <name>substrate</name>
    </ligand>
</feature>
<feature type="sequence conflict" description="In Ref. 1; CAA52961." evidence="4" ref="1">
    <original>QKGADLN</original>
    <variation>RKARISI</variation>
    <location>
        <begin position="18"/>
        <end position="24"/>
    </location>
</feature>
<evidence type="ECO:0000250" key="1">
    <source>
        <dbReference type="UniProtKB" id="Q97U29"/>
    </source>
</evidence>
<evidence type="ECO:0000269" key="2">
    <source>
    </source>
</evidence>
<evidence type="ECO:0000303" key="3">
    <source>
    </source>
</evidence>
<evidence type="ECO:0000305" key="4"/>
<evidence type="ECO:0000305" key="5">
    <source ref="3"/>
</evidence>
<organism>
    <name type="scientific">Dickeya dadantii (strain 3937)</name>
    <name type="common">Erwinia chrysanthemi (strain 3937)</name>
    <dbReference type="NCBI Taxonomy" id="198628"/>
    <lineage>
        <taxon>Bacteria</taxon>
        <taxon>Pseudomonadati</taxon>
        <taxon>Pseudomonadota</taxon>
        <taxon>Gammaproteobacteria</taxon>
        <taxon>Enterobacterales</taxon>
        <taxon>Pectobacteriaceae</taxon>
        <taxon>Dickeya</taxon>
    </lineage>
</organism>
<protein>
    <recommendedName>
        <fullName>2-dehydro-3-deoxygluconokinase</fullName>
        <ecNumber evidence="2">2.7.1.45</ecNumber>
    </recommendedName>
    <alternativeName>
        <fullName>2-keto-3-deoxygluconokinase</fullName>
    </alternativeName>
    <alternativeName>
        <fullName>3-deoxy-2-oxo-D-gluconate kinase</fullName>
    </alternativeName>
    <alternativeName>
        <fullName evidence="3">KDG kinase</fullName>
    </alternativeName>
</protein>
<proteinExistence type="evidence at protein level"/>
<reference key="1">
    <citation type="journal article" date="1994" name="J. Bacteriol.">
        <title>Molecular characterization of the Erwinia chrysanthemi kdgK gene involved in pectin degradation.</title>
        <authorList>
            <person name="Hugouvieux-Cotte-Pattat N."/>
            <person name="Nasser W."/>
            <person name="Robert-Baudouy J."/>
        </authorList>
    </citation>
    <scope>NUCLEOTIDE SEQUENCE [GENOMIC DNA]</scope>
    <scope>FUNCTION</scope>
    <scope>CATALYTIC ACTIVITY</scope>
    <scope>INDUCTION</scope>
    <source>
        <strain>3937</strain>
    </source>
</reference>
<reference key="2">
    <citation type="journal article" date="2011" name="J. Bacteriol.">
        <title>Genome sequence of the plant-pathogenic bacterium Dickeya dadantii 3937.</title>
        <authorList>
            <person name="Glasner J.D."/>
            <person name="Yang C.H."/>
            <person name="Reverchon S."/>
            <person name="Hugouvieux-Cotte-Pattat N."/>
            <person name="Condemine G."/>
            <person name="Bohin J.P."/>
            <person name="Van Gijsegem F."/>
            <person name="Yang S."/>
            <person name="Franza T."/>
            <person name="Expert D."/>
            <person name="Plunkett G. III"/>
            <person name="San Francisco M.J."/>
            <person name="Charkowski A.O."/>
            <person name="Py B."/>
            <person name="Bell K."/>
            <person name="Rauscher L."/>
            <person name="Rodriguez-Palenzuela P."/>
            <person name="Toussaint A."/>
            <person name="Holeva M.C."/>
            <person name="He S.Y."/>
            <person name="Douet V."/>
            <person name="Boccara M."/>
            <person name="Blanco C."/>
            <person name="Toth I."/>
            <person name="Anderson B.D."/>
            <person name="Biehl B.S."/>
            <person name="Mau B."/>
            <person name="Flynn S.M."/>
            <person name="Barras F."/>
            <person name="Lindeberg M."/>
            <person name="Birch P.R."/>
            <person name="Tsuyumu S."/>
            <person name="Shi X."/>
            <person name="Hibbing M."/>
            <person name="Yap M.N."/>
            <person name="Carpentier M."/>
            <person name="Dassa E."/>
            <person name="Umehara M."/>
            <person name="Kim J.F."/>
            <person name="Rusch M."/>
            <person name="Soni P."/>
            <person name="Mayhew G.F."/>
            <person name="Fouts D.E."/>
            <person name="Gill S.R."/>
            <person name="Blattner F.R."/>
            <person name="Keen N.T."/>
            <person name="Perna N.T."/>
        </authorList>
    </citation>
    <scope>NUCLEOTIDE SEQUENCE [LARGE SCALE GENOMIC DNA]</scope>
    <source>
        <strain>3937</strain>
    </source>
</reference>
<reference key="3">
    <citation type="unpublished observations" date="1996-08">
        <authorList>
            <person name="Rudd K.E."/>
        </authorList>
    </citation>
    <scope>IDENTIFICATION OF PROBABLE FRAMESHIFT</scope>
</reference>
<dbReference type="EC" id="2.7.1.45" evidence="2"/>
<dbReference type="EMBL" id="X75047">
    <property type="protein sequence ID" value="CAA52961.1"/>
    <property type="status" value="ALT_FRAME"/>
    <property type="molecule type" value="Genomic_DNA"/>
</dbReference>
<dbReference type="EMBL" id="CP002038">
    <property type="protein sequence ID" value="ADM96338.1"/>
    <property type="molecule type" value="Genomic_DNA"/>
</dbReference>
<dbReference type="PIR" id="C55215">
    <property type="entry name" value="C55215"/>
</dbReference>
<dbReference type="RefSeq" id="WP_013315827.1">
    <property type="nucleotide sequence ID" value="NC_014500.1"/>
</dbReference>
<dbReference type="SMR" id="P45416"/>
<dbReference type="STRING" id="198628.Dda3937_02001"/>
<dbReference type="KEGG" id="ddd:Dda3937_02001"/>
<dbReference type="PATRIC" id="fig|198628.6.peg.127"/>
<dbReference type="eggNOG" id="COG0524">
    <property type="taxonomic scope" value="Bacteria"/>
</dbReference>
<dbReference type="HOGENOM" id="CLU_027634_8_1_6"/>
<dbReference type="OrthoDB" id="9776822at2"/>
<dbReference type="BioCyc" id="MetaCyc:MONOMER-15644"/>
<dbReference type="UniPathway" id="UPA00856">
    <property type="reaction ID" value="UER00828"/>
</dbReference>
<dbReference type="Proteomes" id="UP000006859">
    <property type="component" value="Chromosome"/>
</dbReference>
<dbReference type="GO" id="GO:0005829">
    <property type="term" value="C:cytosol"/>
    <property type="evidence" value="ECO:0007669"/>
    <property type="project" value="TreeGrafter"/>
</dbReference>
<dbReference type="GO" id="GO:0008673">
    <property type="term" value="F:2-dehydro-3-deoxygluconokinase activity"/>
    <property type="evidence" value="ECO:0000314"/>
    <property type="project" value="UniProtKB"/>
</dbReference>
<dbReference type="GO" id="GO:0005524">
    <property type="term" value="F:ATP binding"/>
    <property type="evidence" value="ECO:0000250"/>
    <property type="project" value="UniProtKB"/>
</dbReference>
<dbReference type="GO" id="GO:0000166">
    <property type="term" value="F:nucleotide binding"/>
    <property type="evidence" value="ECO:0000250"/>
    <property type="project" value="UniProtKB"/>
</dbReference>
<dbReference type="GO" id="GO:0019698">
    <property type="term" value="P:D-galacturonate catabolic process"/>
    <property type="evidence" value="ECO:0007669"/>
    <property type="project" value="TreeGrafter"/>
</dbReference>
<dbReference type="GO" id="GO:0042840">
    <property type="term" value="P:D-glucuronate catabolic process"/>
    <property type="evidence" value="ECO:0007669"/>
    <property type="project" value="TreeGrafter"/>
</dbReference>
<dbReference type="GO" id="GO:0006974">
    <property type="term" value="P:DNA damage response"/>
    <property type="evidence" value="ECO:0007669"/>
    <property type="project" value="TreeGrafter"/>
</dbReference>
<dbReference type="GO" id="GO:0016310">
    <property type="term" value="P:phosphorylation"/>
    <property type="evidence" value="ECO:0000314"/>
    <property type="project" value="UniProtKB"/>
</dbReference>
<dbReference type="CDD" id="cd01166">
    <property type="entry name" value="KdgK"/>
    <property type="match status" value="1"/>
</dbReference>
<dbReference type="FunFam" id="3.40.1190.20:FF:000011">
    <property type="entry name" value="2-dehydro-3-deoxygluconokinase, putative"/>
    <property type="match status" value="1"/>
</dbReference>
<dbReference type="Gene3D" id="3.40.1190.20">
    <property type="match status" value="1"/>
</dbReference>
<dbReference type="InterPro" id="IPR002173">
    <property type="entry name" value="Carboh/pur_kinase_PfkB_CS"/>
</dbReference>
<dbReference type="InterPro" id="IPR050306">
    <property type="entry name" value="PfkB_Carbo_kinase"/>
</dbReference>
<dbReference type="InterPro" id="IPR011611">
    <property type="entry name" value="PfkB_dom"/>
</dbReference>
<dbReference type="InterPro" id="IPR029056">
    <property type="entry name" value="Ribokinase-like"/>
</dbReference>
<dbReference type="PANTHER" id="PTHR43085:SF15">
    <property type="entry name" value="2-DEHYDRO-3-DEOXYGLUCONOKINASE"/>
    <property type="match status" value="1"/>
</dbReference>
<dbReference type="PANTHER" id="PTHR43085">
    <property type="entry name" value="HEXOKINASE FAMILY MEMBER"/>
    <property type="match status" value="1"/>
</dbReference>
<dbReference type="Pfam" id="PF00294">
    <property type="entry name" value="PfkB"/>
    <property type="match status" value="1"/>
</dbReference>
<dbReference type="SUPFAM" id="SSF53613">
    <property type="entry name" value="Ribokinase-like"/>
    <property type="match status" value="1"/>
</dbReference>
<dbReference type="PROSITE" id="PS00584">
    <property type="entry name" value="PFKB_KINASES_2"/>
    <property type="match status" value="1"/>
</dbReference>
<keyword id="KW-0067">ATP-binding</keyword>
<keyword id="KW-0119">Carbohydrate metabolism</keyword>
<keyword id="KW-0418">Kinase</keyword>
<keyword id="KW-0547">Nucleotide-binding</keyword>
<keyword id="KW-1185">Reference proteome</keyword>
<keyword id="KW-0808">Transferase</keyword>
<gene>
    <name evidence="3" type="primary">kdgK</name>
    <name type="ordered locus">Dda3937_02001</name>
</gene>